<proteinExistence type="inferred from homology"/>
<name>TGT_SHEB5</name>
<protein>
    <recommendedName>
        <fullName evidence="1">Queuine tRNA-ribosyltransferase</fullName>
        <ecNumber evidence="1">2.4.2.29</ecNumber>
    </recommendedName>
    <alternativeName>
        <fullName evidence="1">Guanine insertion enzyme</fullName>
    </alternativeName>
    <alternativeName>
        <fullName evidence="1">tRNA-guanine transglycosylase</fullName>
    </alternativeName>
</protein>
<reference key="1">
    <citation type="submission" date="2007-02" db="EMBL/GenBank/DDBJ databases">
        <title>Complete sequence of chromosome of Shewanella baltica OS155.</title>
        <authorList>
            <consortium name="US DOE Joint Genome Institute"/>
            <person name="Copeland A."/>
            <person name="Lucas S."/>
            <person name="Lapidus A."/>
            <person name="Barry K."/>
            <person name="Detter J.C."/>
            <person name="Glavina del Rio T."/>
            <person name="Hammon N."/>
            <person name="Israni S."/>
            <person name="Dalin E."/>
            <person name="Tice H."/>
            <person name="Pitluck S."/>
            <person name="Sims D.R."/>
            <person name="Brettin T."/>
            <person name="Bruce D."/>
            <person name="Han C."/>
            <person name="Tapia R."/>
            <person name="Brainard J."/>
            <person name="Schmutz J."/>
            <person name="Larimer F."/>
            <person name="Land M."/>
            <person name="Hauser L."/>
            <person name="Kyrpides N."/>
            <person name="Mikhailova N."/>
            <person name="Brettar I."/>
            <person name="Klappenbach J."/>
            <person name="Konstantinidis K."/>
            <person name="Rodrigues J."/>
            <person name="Tiedje J."/>
            <person name="Richardson P."/>
        </authorList>
    </citation>
    <scope>NUCLEOTIDE SEQUENCE [LARGE SCALE GENOMIC DNA]</scope>
    <source>
        <strain>OS155 / ATCC BAA-1091</strain>
    </source>
</reference>
<gene>
    <name evidence="1" type="primary">tgt</name>
    <name type="ordered locus">Sbal_2787</name>
</gene>
<evidence type="ECO:0000255" key="1">
    <source>
        <dbReference type="HAMAP-Rule" id="MF_00168"/>
    </source>
</evidence>
<comment type="function">
    <text evidence="1">Catalyzes the base-exchange of a guanine (G) residue with the queuine precursor 7-aminomethyl-7-deazaguanine (PreQ1) at position 34 (anticodon wobble position) in tRNAs with GU(N) anticodons (tRNA-Asp, -Asn, -His and -Tyr). Catalysis occurs through a double-displacement mechanism. The nucleophile active site attacks the C1' of nucleotide 34 to detach the guanine base from the RNA, forming a covalent enzyme-RNA intermediate. The proton acceptor active site deprotonates the incoming PreQ1, allowing a nucleophilic attack on the C1' of the ribose to form the product. After dissociation, two additional enzymatic reactions on the tRNA convert PreQ1 to queuine (Q), resulting in the hypermodified nucleoside queuosine (7-(((4,5-cis-dihydroxy-2-cyclopenten-1-yl)amino)methyl)-7-deazaguanosine).</text>
</comment>
<comment type="catalytic activity">
    <reaction evidence="1">
        <text>7-aminomethyl-7-carbaguanine + guanosine(34) in tRNA = 7-aminomethyl-7-carbaguanosine(34) in tRNA + guanine</text>
        <dbReference type="Rhea" id="RHEA:24104"/>
        <dbReference type="Rhea" id="RHEA-COMP:10341"/>
        <dbReference type="Rhea" id="RHEA-COMP:10342"/>
        <dbReference type="ChEBI" id="CHEBI:16235"/>
        <dbReference type="ChEBI" id="CHEBI:58703"/>
        <dbReference type="ChEBI" id="CHEBI:74269"/>
        <dbReference type="ChEBI" id="CHEBI:82833"/>
        <dbReference type="EC" id="2.4.2.29"/>
    </reaction>
</comment>
<comment type="cofactor">
    <cofactor evidence="1">
        <name>Zn(2+)</name>
        <dbReference type="ChEBI" id="CHEBI:29105"/>
    </cofactor>
    <text evidence="1">Binds 1 zinc ion per subunit.</text>
</comment>
<comment type="pathway">
    <text evidence="1">tRNA modification; tRNA-queuosine biosynthesis.</text>
</comment>
<comment type="subunit">
    <text evidence="1">Homodimer. Within each dimer, one monomer is responsible for RNA recognition and catalysis, while the other monomer binds to the replacement base PreQ1.</text>
</comment>
<comment type="similarity">
    <text evidence="1">Belongs to the queuine tRNA-ribosyltransferase family.</text>
</comment>
<keyword id="KW-0328">Glycosyltransferase</keyword>
<keyword id="KW-0479">Metal-binding</keyword>
<keyword id="KW-0671">Queuosine biosynthesis</keyword>
<keyword id="KW-1185">Reference proteome</keyword>
<keyword id="KW-0808">Transferase</keyword>
<keyword id="KW-0819">tRNA processing</keyword>
<keyword id="KW-0862">Zinc</keyword>
<feature type="chain" id="PRO_1000016844" description="Queuine tRNA-ribosyltransferase">
    <location>
        <begin position="1"/>
        <end position="374"/>
    </location>
</feature>
<feature type="region of interest" description="RNA binding" evidence="1">
    <location>
        <begin position="245"/>
        <end position="251"/>
    </location>
</feature>
<feature type="region of interest" description="RNA binding; important for wobble base 34 recognition" evidence="1">
    <location>
        <begin position="269"/>
        <end position="273"/>
    </location>
</feature>
<feature type="active site" description="Proton acceptor" evidence="1">
    <location>
        <position position="89"/>
    </location>
</feature>
<feature type="active site" description="Nucleophile" evidence="1">
    <location>
        <position position="264"/>
    </location>
</feature>
<feature type="binding site" evidence="1">
    <location>
        <begin position="89"/>
        <end position="93"/>
    </location>
    <ligand>
        <name>substrate</name>
    </ligand>
</feature>
<feature type="binding site" evidence="1">
    <location>
        <position position="143"/>
    </location>
    <ligand>
        <name>substrate</name>
    </ligand>
</feature>
<feature type="binding site" evidence="1">
    <location>
        <position position="187"/>
    </location>
    <ligand>
        <name>substrate</name>
    </ligand>
</feature>
<feature type="binding site" evidence="1">
    <location>
        <position position="214"/>
    </location>
    <ligand>
        <name>substrate</name>
    </ligand>
</feature>
<feature type="binding site" evidence="1">
    <location>
        <position position="302"/>
    </location>
    <ligand>
        <name>Zn(2+)</name>
        <dbReference type="ChEBI" id="CHEBI:29105"/>
    </ligand>
</feature>
<feature type="binding site" evidence="1">
    <location>
        <position position="304"/>
    </location>
    <ligand>
        <name>Zn(2+)</name>
        <dbReference type="ChEBI" id="CHEBI:29105"/>
    </ligand>
</feature>
<feature type="binding site" evidence="1">
    <location>
        <position position="307"/>
    </location>
    <ligand>
        <name>Zn(2+)</name>
        <dbReference type="ChEBI" id="CHEBI:29105"/>
    </ligand>
</feature>
<feature type="binding site" evidence="1">
    <location>
        <position position="333"/>
    </location>
    <ligand>
        <name>Zn(2+)</name>
        <dbReference type="ChEBI" id="CHEBI:29105"/>
    </ligand>
</feature>
<accession>A3D6B1</accession>
<sequence>MKFELDTTDGRARRGRLIFDRGTVETPAFMPVGTYGTVKGMTPEEVRATGADILLGNTFHLWLRPGEEIMRKHGDLHDFMNWQRPILTDSGGFQVFSLGDIRKITEEGVHFRSPINGEKIFLDPEKSMQIQDALGSDVVMIFDECTPYPATEDEARKSMQMSLRWARRSRDEFDRLENPNSLFGIIQGGVYEDLRDESLKGLVDIGFDGYAVGGLAVGEPKADMHRILEHICPQIPADKPRYLMGVGKPEDLVEGVRRGVDMFDCVMPTRNARNGHLFTSEGVIKIRNARHRDDTSPLDTKCDCYTCKNYSRAYLYHLDRCNEILGARLNTIHNLRYYQMLMEGLRGAIETGTLDAFVADFYTSQGREVPELVD</sequence>
<dbReference type="EC" id="2.4.2.29" evidence="1"/>
<dbReference type="EMBL" id="CP000563">
    <property type="protein sequence ID" value="ABN62274.1"/>
    <property type="molecule type" value="Genomic_DNA"/>
</dbReference>
<dbReference type="RefSeq" id="WP_006082277.1">
    <property type="nucleotide sequence ID" value="NC_009052.1"/>
</dbReference>
<dbReference type="SMR" id="A3D6B1"/>
<dbReference type="STRING" id="325240.Sbal_2787"/>
<dbReference type="GeneID" id="11772965"/>
<dbReference type="KEGG" id="sbl:Sbal_2787"/>
<dbReference type="HOGENOM" id="CLU_022060_0_1_6"/>
<dbReference type="OrthoDB" id="9805417at2"/>
<dbReference type="UniPathway" id="UPA00392"/>
<dbReference type="Proteomes" id="UP000001557">
    <property type="component" value="Chromosome"/>
</dbReference>
<dbReference type="GO" id="GO:0005829">
    <property type="term" value="C:cytosol"/>
    <property type="evidence" value="ECO:0007669"/>
    <property type="project" value="TreeGrafter"/>
</dbReference>
<dbReference type="GO" id="GO:0046872">
    <property type="term" value="F:metal ion binding"/>
    <property type="evidence" value="ECO:0007669"/>
    <property type="project" value="UniProtKB-KW"/>
</dbReference>
<dbReference type="GO" id="GO:0008479">
    <property type="term" value="F:tRNA-guanosine(34) queuine transglycosylase activity"/>
    <property type="evidence" value="ECO:0007669"/>
    <property type="project" value="UniProtKB-UniRule"/>
</dbReference>
<dbReference type="GO" id="GO:0008616">
    <property type="term" value="P:queuosine biosynthetic process"/>
    <property type="evidence" value="ECO:0007669"/>
    <property type="project" value="UniProtKB-UniRule"/>
</dbReference>
<dbReference type="GO" id="GO:0002099">
    <property type="term" value="P:tRNA wobble guanine modification"/>
    <property type="evidence" value="ECO:0007669"/>
    <property type="project" value="TreeGrafter"/>
</dbReference>
<dbReference type="GO" id="GO:0101030">
    <property type="term" value="P:tRNA-guanine transglycosylation"/>
    <property type="evidence" value="ECO:0007669"/>
    <property type="project" value="InterPro"/>
</dbReference>
<dbReference type="FunFam" id="3.20.20.105:FF:000001">
    <property type="entry name" value="Queuine tRNA-ribosyltransferase"/>
    <property type="match status" value="1"/>
</dbReference>
<dbReference type="Gene3D" id="3.20.20.105">
    <property type="entry name" value="Queuine tRNA-ribosyltransferase-like"/>
    <property type="match status" value="1"/>
</dbReference>
<dbReference type="HAMAP" id="MF_00168">
    <property type="entry name" value="Q_tRNA_Tgt"/>
    <property type="match status" value="1"/>
</dbReference>
<dbReference type="InterPro" id="IPR050076">
    <property type="entry name" value="ArchSynthase1/Queuine_TRR"/>
</dbReference>
<dbReference type="InterPro" id="IPR004803">
    <property type="entry name" value="TGT"/>
</dbReference>
<dbReference type="InterPro" id="IPR036511">
    <property type="entry name" value="TGT-like_sf"/>
</dbReference>
<dbReference type="InterPro" id="IPR002616">
    <property type="entry name" value="tRNA_ribo_trans-like"/>
</dbReference>
<dbReference type="NCBIfam" id="TIGR00430">
    <property type="entry name" value="Q_tRNA_tgt"/>
    <property type="match status" value="1"/>
</dbReference>
<dbReference type="NCBIfam" id="TIGR00449">
    <property type="entry name" value="tgt_general"/>
    <property type="match status" value="1"/>
</dbReference>
<dbReference type="PANTHER" id="PTHR46499">
    <property type="entry name" value="QUEUINE TRNA-RIBOSYLTRANSFERASE"/>
    <property type="match status" value="1"/>
</dbReference>
<dbReference type="PANTHER" id="PTHR46499:SF1">
    <property type="entry name" value="QUEUINE TRNA-RIBOSYLTRANSFERASE"/>
    <property type="match status" value="1"/>
</dbReference>
<dbReference type="Pfam" id="PF01702">
    <property type="entry name" value="TGT"/>
    <property type="match status" value="1"/>
</dbReference>
<dbReference type="SUPFAM" id="SSF51713">
    <property type="entry name" value="tRNA-guanine transglycosylase"/>
    <property type="match status" value="1"/>
</dbReference>
<organism>
    <name type="scientific">Shewanella baltica (strain OS155 / ATCC BAA-1091)</name>
    <dbReference type="NCBI Taxonomy" id="325240"/>
    <lineage>
        <taxon>Bacteria</taxon>
        <taxon>Pseudomonadati</taxon>
        <taxon>Pseudomonadota</taxon>
        <taxon>Gammaproteobacteria</taxon>
        <taxon>Alteromonadales</taxon>
        <taxon>Shewanellaceae</taxon>
        <taxon>Shewanella</taxon>
    </lineage>
</organism>